<gene>
    <name type="primary">nqo6</name>
</gene>
<sequence>MTGLNTAGADRDLATAELNRELQDKGFLLTTTEDIINWARNGSLHWMTFGLACCAVEMMQTSMPRYDLERFGTAPRASPRQSDLMIVAGTLTNKMAPALRKVYDQMPEPRYVISMGSCANGGGYYHYSYSVVRGCDRIVPVDIYVPGCPPTAEALLYGILQLQRRASGAPARW</sequence>
<accession>P29918</accession>
<evidence type="ECO:0000255" key="1"/>
<evidence type="ECO:0000305" key="2"/>
<feature type="chain" id="PRO_0000118762" description="NADH-quinone oxidoreductase subunit 6">
    <location>
        <begin position="1"/>
        <end position="173"/>
    </location>
</feature>
<feature type="binding site" evidence="1">
    <location>
        <position position="53"/>
    </location>
    <ligand>
        <name>[4Fe-4S] cluster</name>
        <dbReference type="ChEBI" id="CHEBI:49883"/>
    </ligand>
</feature>
<feature type="binding site" evidence="1">
    <location>
        <position position="54"/>
    </location>
    <ligand>
        <name>[4Fe-4S] cluster</name>
        <dbReference type="ChEBI" id="CHEBI:49883"/>
    </ligand>
</feature>
<feature type="binding site" evidence="1">
    <location>
        <position position="118"/>
    </location>
    <ligand>
        <name>[4Fe-4S] cluster</name>
        <dbReference type="ChEBI" id="CHEBI:49883"/>
    </ligand>
</feature>
<feature type="binding site" evidence="1">
    <location>
        <position position="148"/>
    </location>
    <ligand>
        <name>[4Fe-4S] cluster</name>
        <dbReference type="ChEBI" id="CHEBI:49883"/>
    </ligand>
</feature>
<keyword id="KW-0004">4Fe-4S</keyword>
<keyword id="KW-0997">Cell inner membrane</keyword>
<keyword id="KW-1003">Cell membrane</keyword>
<keyword id="KW-0408">Iron</keyword>
<keyword id="KW-0411">Iron-sulfur</keyword>
<keyword id="KW-0472">Membrane</keyword>
<keyword id="KW-0479">Metal-binding</keyword>
<keyword id="KW-0520">NAD</keyword>
<keyword id="KW-0874">Quinone</keyword>
<keyword id="KW-1278">Translocase</keyword>
<keyword id="KW-0830">Ubiquinone</keyword>
<name>NQO6_PARDE</name>
<protein>
    <recommendedName>
        <fullName>NADH-quinone oxidoreductase subunit 6</fullName>
        <ecNumber>7.1.1.-</ecNumber>
    </recommendedName>
    <alternativeName>
        <fullName>NADH dehydrogenase I subunit 6</fullName>
    </alternativeName>
    <alternativeName>
        <fullName>NDH-1 subunit 6</fullName>
    </alternativeName>
</protein>
<organism>
    <name type="scientific">Paracoccus denitrificans</name>
    <dbReference type="NCBI Taxonomy" id="266"/>
    <lineage>
        <taxon>Bacteria</taxon>
        <taxon>Pseudomonadati</taxon>
        <taxon>Pseudomonadota</taxon>
        <taxon>Alphaproteobacteria</taxon>
        <taxon>Rhodobacterales</taxon>
        <taxon>Paracoccaceae</taxon>
        <taxon>Paracoccus</taxon>
    </lineage>
</organism>
<proteinExistence type="inferred from homology"/>
<dbReference type="EC" id="7.1.1.-"/>
<dbReference type="EMBL" id="M93015">
    <property type="protein sequence ID" value="AAA03036.1"/>
    <property type="status" value="ALT_SEQ"/>
    <property type="molecule type" value="Unassigned_DNA"/>
</dbReference>
<dbReference type="PIR" id="E42573">
    <property type="entry name" value="E42573"/>
</dbReference>
<dbReference type="SMR" id="P29918"/>
<dbReference type="TCDB" id="3.D.1.2.1">
    <property type="family name" value="the h+ or na+-translocating nadh dehydrogenase (ndh) family"/>
</dbReference>
<dbReference type="GO" id="GO:0005886">
    <property type="term" value="C:plasma membrane"/>
    <property type="evidence" value="ECO:0007669"/>
    <property type="project" value="UniProtKB-SubCell"/>
</dbReference>
<dbReference type="GO" id="GO:0045271">
    <property type="term" value="C:respiratory chain complex I"/>
    <property type="evidence" value="ECO:0007669"/>
    <property type="project" value="TreeGrafter"/>
</dbReference>
<dbReference type="GO" id="GO:0051539">
    <property type="term" value="F:4 iron, 4 sulfur cluster binding"/>
    <property type="evidence" value="ECO:0007669"/>
    <property type="project" value="UniProtKB-KW"/>
</dbReference>
<dbReference type="GO" id="GO:0005506">
    <property type="term" value="F:iron ion binding"/>
    <property type="evidence" value="ECO:0007669"/>
    <property type="project" value="UniProtKB-UniRule"/>
</dbReference>
<dbReference type="GO" id="GO:0008137">
    <property type="term" value="F:NADH dehydrogenase (ubiquinone) activity"/>
    <property type="evidence" value="ECO:0007669"/>
    <property type="project" value="InterPro"/>
</dbReference>
<dbReference type="GO" id="GO:0050136">
    <property type="term" value="F:NADH:ubiquinone reductase (non-electrogenic) activity"/>
    <property type="evidence" value="ECO:0007669"/>
    <property type="project" value="UniProtKB-UniRule"/>
</dbReference>
<dbReference type="GO" id="GO:0048038">
    <property type="term" value="F:quinone binding"/>
    <property type="evidence" value="ECO:0007669"/>
    <property type="project" value="UniProtKB-KW"/>
</dbReference>
<dbReference type="GO" id="GO:0009060">
    <property type="term" value="P:aerobic respiration"/>
    <property type="evidence" value="ECO:0007669"/>
    <property type="project" value="TreeGrafter"/>
</dbReference>
<dbReference type="GO" id="GO:0015990">
    <property type="term" value="P:electron transport coupled proton transport"/>
    <property type="evidence" value="ECO:0007669"/>
    <property type="project" value="TreeGrafter"/>
</dbReference>
<dbReference type="FunFam" id="3.40.50.12280:FF:000001">
    <property type="entry name" value="NADH-quinone oxidoreductase subunit B 2"/>
    <property type="match status" value="1"/>
</dbReference>
<dbReference type="Gene3D" id="3.40.50.12280">
    <property type="match status" value="1"/>
</dbReference>
<dbReference type="HAMAP" id="MF_01356">
    <property type="entry name" value="NDH1_NuoB"/>
    <property type="match status" value="1"/>
</dbReference>
<dbReference type="InterPro" id="IPR006137">
    <property type="entry name" value="NADH_UbQ_OxRdtase-like_20kDa"/>
</dbReference>
<dbReference type="InterPro" id="IPR006138">
    <property type="entry name" value="NADH_UQ_OxRdtase_20Kd_su"/>
</dbReference>
<dbReference type="NCBIfam" id="TIGR01957">
    <property type="entry name" value="nuoB_fam"/>
    <property type="match status" value="1"/>
</dbReference>
<dbReference type="NCBIfam" id="NF005012">
    <property type="entry name" value="PRK06411.1"/>
    <property type="match status" value="1"/>
</dbReference>
<dbReference type="PANTHER" id="PTHR11995">
    <property type="entry name" value="NADH DEHYDROGENASE"/>
    <property type="match status" value="1"/>
</dbReference>
<dbReference type="PANTHER" id="PTHR11995:SF14">
    <property type="entry name" value="NADH DEHYDROGENASE [UBIQUINONE] IRON-SULFUR PROTEIN 7, MITOCHONDRIAL"/>
    <property type="match status" value="1"/>
</dbReference>
<dbReference type="Pfam" id="PF01058">
    <property type="entry name" value="Oxidored_q6"/>
    <property type="match status" value="1"/>
</dbReference>
<dbReference type="SUPFAM" id="SSF56770">
    <property type="entry name" value="HydA/Nqo6-like"/>
    <property type="match status" value="1"/>
</dbReference>
<dbReference type="PROSITE" id="PS01150">
    <property type="entry name" value="COMPLEX1_20K"/>
    <property type="match status" value="1"/>
</dbReference>
<comment type="function">
    <text>NDH-1 shuttles electrons from NADH, via FMN and iron-sulfur (Fe-S) centers, to quinones in the respiratory chain. The immediate electron acceptor for the enzyme in this species is believed to be ubiquinone. Couples the redox reaction to proton translocation (for every two electrons transferred, four hydrogen ions are translocated across the cytoplasmic membrane), and thus conserves the redox energy in a proton gradient.</text>
</comment>
<comment type="catalytic activity">
    <reaction>
        <text>a quinone + NADH + 5 H(+)(in) = a quinol + NAD(+) + 4 H(+)(out)</text>
        <dbReference type="Rhea" id="RHEA:57888"/>
        <dbReference type="ChEBI" id="CHEBI:15378"/>
        <dbReference type="ChEBI" id="CHEBI:24646"/>
        <dbReference type="ChEBI" id="CHEBI:57540"/>
        <dbReference type="ChEBI" id="CHEBI:57945"/>
        <dbReference type="ChEBI" id="CHEBI:132124"/>
    </reaction>
</comment>
<comment type="cofactor">
    <cofactor evidence="2">
        <name>[4Fe-4S] cluster</name>
        <dbReference type="ChEBI" id="CHEBI:49883"/>
    </cofactor>
    <text evidence="2">Binds 1 [4Fe-4S] cluster.</text>
</comment>
<comment type="subunit">
    <text>NDH-1 is composed of at least 14 different subunits, Nqo1 to Nqo14. The complex has a L-shaped structure, with the hydrophobic arm (subunits Nqo7, Nqo8, Nqo10 to Nqo14) embedded in the inner membrane and the hydrophilic peripheral arm (subunits Nqo1 to Nqo6, Nqo9) protruding into the bacterial cytoplasm. The hydrophilic domain contains all the redox centers.</text>
</comment>
<comment type="subcellular location">
    <subcellularLocation>
        <location evidence="2">Cell inner membrane</location>
        <topology evidence="2">Peripheral membrane protein</topology>
        <orientation evidence="2">Cytoplasmic side</orientation>
    </subcellularLocation>
</comment>
<comment type="similarity">
    <text evidence="2">Belongs to the complex I 20 kDa subunit family.</text>
</comment>
<reference key="1">
    <citation type="journal article" date="1992" name="Biochemistry">
        <title>Gene cluster of the energy-transducing NADH-quinone oxidoreductase of Paracoccus denitrificans: characterization of four structural gene products.</title>
        <authorList>
            <person name="Xu X."/>
            <person name="Matsuno-Yagi A."/>
            <person name="Yagi T."/>
        </authorList>
    </citation>
    <scope>NUCLEOTIDE SEQUENCE [GENOMIC DNA]</scope>
    <source>
        <strain>ATCC 13543 / NRRL B-3784 / NRC 449</strain>
    </source>
</reference>